<dbReference type="EC" id="4.2.1.20" evidence="1"/>
<dbReference type="EMBL" id="AE010299">
    <property type="protein sequence ID" value="AAM06363.1"/>
    <property type="molecule type" value="Genomic_DNA"/>
</dbReference>
<dbReference type="RefSeq" id="WP_011022930.1">
    <property type="nucleotide sequence ID" value="NC_003552.1"/>
</dbReference>
<dbReference type="SMR" id="Q8TLP4"/>
<dbReference type="FunCoup" id="Q8TLP4">
    <property type="interactions" value="91"/>
</dbReference>
<dbReference type="STRING" id="188937.MA_2990"/>
<dbReference type="EnsemblBacteria" id="AAM06363">
    <property type="protein sequence ID" value="AAM06363"/>
    <property type="gene ID" value="MA_2990"/>
</dbReference>
<dbReference type="GeneID" id="1474884"/>
<dbReference type="KEGG" id="mac:MA_2990"/>
<dbReference type="HOGENOM" id="CLU_016734_0_0_2"/>
<dbReference type="InParanoid" id="Q8TLP4"/>
<dbReference type="OrthoDB" id="25658at2157"/>
<dbReference type="PhylomeDB" id="Q8TLP4"/>
<dbReference type="UniPathway" id="UPA00035">
    <property type="reaction ID" value="UER00044"/>
</dbReference>
<dbReference type="Proteomes" id="UP000002487">
    <property type="component" value="Chromosome"/>
</dbReference>
<dbReference type="GO" id="GO:0005829">
    <property type="term" value="C:cytosol"/>
    <property type="evidence" value="ECO:0000318"/>
    <property type="project" value="GO_Central"/>
</dbReference>
<dbReference type="GO" id="GO:0004834">
    <property type="term" value="F:tryptophan synthase activity"/>
    <property type="evidence" value="ECO:0000318"/>
    <property type="project" value="GO_Central"/>
</dbReference>
<dbReference type="GO" id="GO:0000162">
    <property type="term" value="P:L-tryptophan biosynthetic process"/>
    <property type="evidence" value="ECO:0000318"/>
    <property type="project" value="GO_Central"/>
</dbReference>
<dbReference type="CDD" id="cd04724">
    <property type="entry name" value="Tryptophan_synthase_alpha"/>
    <property type="match status" value="1"/>
</dbReference>
<dbReference type="FunFam" id="3.20.20.70:FF:000037">
    <property type="entry name" value="Tryptophan synthase alpha chain"/>
    <property type="match status" value="1"/>
</dbReference>
<dbReference type="Gene3D" id="3.20.20.70">
    <property type="entry name" value="Aldolase class I"/>
    <property type="match status" value="1"/>
</dbReference>
<dbReference type="HAMAP" id="MF_00131">
    <property type="entry name" value="Trp_synth_alpha"/>
    <property type="match status" value="1"/>
</dbReference>
<dbReference type="InterPro" id="IPR013785">
    <property type="entry name" value="Aldolase_TIM"/>
</dbReference>
<dbReference type="InterPro" id="IPR011060">
    <property type="entry name" value="RibuloseP-bd_barrel"/>
</dbReference>
<dbReference type="InterPro" id="IPR018204">
    <property type="entry name" value="Trp_synthase_alpha_AS"/>
</dbReference>
<dbReference type="InterPro" id="IPR002028">
    <property type="entry name" value="Trp_synthase_suA"/>
</dbReference>
<dbReference type="NCBIfam" id="TIGR00262">
    <property type="entry name" value="trpA"/>
    <property type="match status" value="1"/>
</dbReference>
<dbReference type="PANTHER" id="PTHR43406:SF1">
    <property type="entry name" value="TRYPTOPHAN SYNTHASE ALPHA CHAIN, CHLOROPLASTIC"/>
    <property type="match status" value="1"/>
</dbReference>
<dbReference type="PANTHER" id="PTHR43406">
    <property type="entry name" value="TRYPTOPHAN SYNTHASE, ALPHA CHAIN"/>
    <property type="match status" value="1"/>
</dbReference>
<dbReference type="Pfam" id="PF00290">
    <property type="entry name" value="Trp_syntA"/>
    <property type="match status" value="1"/>
</dbReference>
<dbReference type="SUPFAM" id="SSF51366">
    <property type="entry name" value="Ribulose-phoshate binding barrel"/>
    <property type="match status" value="1"/>
</dbReference>
<dbReference type="PROSITE" id="PS00167">
    <property type="entry name" value="TRP_SYNTHASE_ALPHA"/>
    <property type="match status" value="1"/>
</dbReference>
<gene>
    <name evidence="1" type="primary">trpA</name>
    <name type="ordered locus">MA_2990</name>
</gene>
<evidence type="ECO:0000255" key="1">
    <source>
        <dbReference type="HAMAP-Rule" id="MF_00131"/>
    </source>
</evidence>
<comment type="function">
    <text>The alpha subunit is responsible for the aldol cleavage of indoleglycerol phosphate to indole and glyceraldehyde 3-phosphate.</text>
</comment>
<comment type="catalytic activity">
    <reaction evidence="1">
        <text>(1S,2R)-1-C-(indol-3-yl)glycerol 3-phosphate + L-serine = D-glyceraldehyde 3-phosphate + L-tryptophan + H2O</text>
        <dbReference type="Rhea" id="RHEA:10532"/>
        <dbReference type="ChEBI" id="CHEBI:15377"/>
        <dbReference type="ChEBI" id="CHEBI:33384"/>
        <dbReference type="ChEBI" id="CHEBI:57912"/>
        <dbReference type="ChEBI" id="CHEBI:58866"/>
        <dbReference type="ChEBI" id="CHEBI:59776"/>
        <dbReference type="EC" id="4.2.1.20"/>
    </reaction>
</comment>
<comment type="pathway">
    <text evidence="1">Amino-acid biosynthesis; L-tryptophan biosynthesis; L-tryptophan from chorismate: step 5/5.</text>
</comment>
<comment type="subunit">
    <text evidence="1">Tetramer of two alpha and two beta chains.</text>
</comment>
<comment type="similarity">
    <text evidence="1">Belongs to the TrpA family.</text>
</comment>
<proteinExistence type="inferred from homology"/>
<name>TRPA_METAC</name>
<reference key="1">
    <citation type="journal article" date="2002" name="Genome Res.">
        <title>The genome of Methanosarcina acetivorans reveals extensive metabolic and physiological diversity.</title>
        <authorList>
            <person name="Galagan J.E."/>
            <person name="Nusbaum C."/>
            <person name="Roy A."/>
            <person name="Endrizzi M.G."/>
            <person name="Macdonald P."/>
            <person name="FitzHugh W."/>
            <person name="Calvo S."/>
            <person name="Engels R."/>
            <person name="Smirnov S."/>
            <person name="Atnoor D."/>
            <person name="Brown A."/>
            <person name="Allen N."/>
            <person name="Naylor J."/>
            <person name="Stange-Thomann N."/>
            <person name="DeArellano K."/>
            <person name="Johnson R."/>
            <person name="Linton L."/>
            <person name="McEwan P."/>
            <person name="McKernan K."/>
            <person name="Talamas J."/>
            <person name="Tirrell A."/>
            <person name="Ye W."/>
            <person name="Zimmer A."/>
            <person name="Barber R.D."/>
            <person name="Cann I."/>
            <person name="Graham D.E."/>
            <person name="Grahame D.A."/>
            <person name="Guss A.M."/>
            <person name="Hedderich R."/>
            <person name="Ingram-Smith C."/>
            <person name="Kuettner H.C."/>
            <person name="Krzycki J.A."/>
            <person name="Leigh J.A."/>
            <person name="Li W."/>
            <person name="Liu J."/>
            <person name="Mukhopadhyay B."/>
            <person name="Reeve J.N."/>
            <person name="Smith K."/>
            <person name="Springer T.A."/>
            <person name="Umayam L.A."/>
            <person name="White O."/>
            <person name="White R.H."/>
            <person name="de Macario E.C."/>
            <person name="Ferry J.G."/>
            <person name="Jarrell K.F."/>
            <person name="Jing H."/>
            <person name="Macario A.J.L."/>
            <person name="Paulsen I.T."/>
            <person name="Pritchett M."/>
            <person name="Sowers K.R."/>
            <person name="Swanson R.V."/>
            <person name="Zinder S.H."/>
            <person name="Lander E."/>
            <person name="Metcalf W.W."/>
            <person name="Birren B."/>
        </authorList>
    </citation>
    <scope>NUCLEOTIDE SEQUENCE [LARGE SCALE GENOMIC DNA]</scope>
    <source>
        <strain>ATCC 35395 / DSM 2834 / JCM 12185 / C2A</strain>
    </source>
</reference>
<organism>
    <name type="scientific">Methanosarcina acetivorans (strain ATCC 35395 / DSM 2834 / JCM 12185 / C2A)</name>
    <dbReference type="NCBI Taxonomy" id="188937"/>
    <lineage>
        <taxon>Archaea</taxon>
        <taxon>Methanobacteriati</taxon>
        <taxon>Methanobacteriota</taxon>
        <taxon>Stenosarchaea group</taxon>
        <taxon>Methanomicrobia</taxon>
        <taxon>Methanosarcinales</taxon>
        <taxon>Methanosarcinaceae</taxon>
        <taxon>Methanosarcina</taxon>
    </lineage>
</organism>
<protein>
    <recommendedName>
        <fullName evidence="1">Tryptophan synthase alpha chain</fullName>
        <ecNumber evidence="1">4.2.1.20</ecNumber>
    </recommendedName>
</protein>
<keyword id="KW-0028">Amino-acid biosynthesis</keyword>
<keyword id="KW-0057">Aromatic amino acid biosynthesis</keyword>
<keyword id="KW-0456">Lyase</keyword>
<keyword id="KW-1185">Reference proteome</keyword>
<keyword id="KW-0822">Tryptophan biosynthesis</keyword>
<accession>Q8TLP4</accession>
<sequence>MATELRATEHGRQKISEKFDELKQKKEGALIGYVMAGDPSAEATFGIVKALVNGGADIIELGFPFSDPVADGPTIQAAGQRALAAGMDIEHYFELVRGLGVEVPLVCMTYYNPVFRYGVDKFVEHAADAGISGLIIPDIPVEEAADLKSSCEKYGLDLIFLVAPTTTDARIRKILERGSGFIYLVSRLGVTGARADVSGSTKELLSRVKTDIPKAVGFGISTGKQAAEVRKAGADAVIVGSVFVRIIEEGNGVNEKLEALARELKSGILGAN</sequence>
<feature type="chain" id="PRO_0000098888" description="Tryptophan synthase alpha chain">
    <location>
        <begin position="1"/>
        <end position="272"/>
    </location>
</feature>
<feature type="active site" description="Proton acceptor" evidence="1">
    <location>
        <position position="60"/>
    </location>
</feature>
<feature type="active site" description="Proton acceptor" evidence="1">
    <location>
        <position position="71"/>
    </location>
</feature>